<sequence length="185" mass="20686">MKCLYILSGHTDRIYSTIYDHERKRCISASMDTTIRIWDLENIRNNGECSYATNSASPCAKILGAMYTLRGHRALVGLLGLSDKFLVSASVDGSIRCWDANTYFLKHFFDHTQLNTITALHVSDEVLVSGSEGLLNIYDLNSGLLVRSDTLSGADNVWNVSFKDNTLVAAVERDKRNLLEILDFS</sequence>
<comment type="function">
    <text evidence="1">May be involved in the modulation of rDNA transcription.</text>
</comment>
<protein>
    <recommendedName>
        <fullName>Regulator of rDNA transcription protein 13</fullName>
    </recommendedName>
</protein>
<proteinExistence type="predicted"/>
<name>RRT13_YEAST</name>
<gene>
    <name type="primary">RRT13</name>
    <name type="ordered locus">YER066W</name>
</gene>
<organism>
    <name type="scientific">Saccharomyces cerevisiae (strain ATCC 204508 / S288c)</name>
    <name type="common">Baker's yeast</name>
    <dbReference type="NCBI Taxonomy" id="559292"/>
    <lineage>
        <taxon>Eukaryota</taxon>
        <taxon>Fungi</taxon>
        <taxon>Dikarya</taxon>
        <taxon>Ascomycota</taxon>
        <taxon>Saccharomycotina</taxon>
        <taxon>Saccharomycetes</taxon>
        <taxon>Saccharomycetales</taxon>
        <taxon>Saccharomycetaceae</taxon>
        <taxon>Saccharomyces</taxon>
    </lineage>
</organism>
<accession>P40042</accession>
<accession>D3DLX1</accession>
<keyword id="KW-1185">Reference proteome</keyword>
<keyword id="KW-0677">Repeat</keyword>
<keyword id="KW-0804">Transcription</keyword>
<keyword id="KW-0805">Transcription regulation</keyword>
<keyword id="KW-0853">WD repeat</keyword>
<reference key="1">
    <citation type="journal article" date="1997" name="Nature">
        <title>The nucleotide sequence of Saccharomyces cerevisiae chromosome V.</title>
        <authorList>
            <person name="Dietrich F.S."/>
            <person name="Mulligan J.T."/>
            <person name="Hennessy K.M."/>
            <person name="Yelton M.A."/>
            <person name="Allen E."/>
            <person name="Araujo R."/>
            <person name="Aviles E."/>
            <person name="Berno A."/>
            <person name="Brennan T."/>
            <person name="Carpenter J."/>
            <person name="Chen E."/>
            <person name="Cherry J.M."/>
            <person name="Chung E."/>
            <person name="Duncan M."/>
            <person name="Guzman E."/>
            <person name="Hartzell G."/>
            <person name="Hunicke-Smith S."/>
            <person name="Hyman R.W."/>
            <person name="Kayser A."/>
            <person name="Komp C."/>
            <person name="Lashkari D."/>
            <person name="Lew H."/>
            <person name="Lin D."/>
            <person name="Mosedale D."/>
            <person name="Nakahara K."/>
            <person name="Namath A."/>
            <person name="Norgren R."/>
            <person name="Oefner P."/>
            <person name="Oh C."/>
            <person name="Petel F.X."/>
            <person name="Roberts D."/>
            <person name="Sehl P."/>
            <person name="Schramm S."/>
            <person name="Shogren T."/>
            <person name="Smith V."/>
            <person name="Taylor P."/>
            <person name="Wei Y."/>
            <person name="Botstein D."/>
            <person name="Davis R.W."/>
        </authorList>
    </citation>
    <scope>NUCLEOTIDE SEQUENCE [LARGE SCALE GENOMIC DNA]</scope>
    <source>
        <strain>ATCC 204508 / S288c</strain>
    </source>
</reference>
<reference key="2">
    <citation type="journal article" date="2014" name="G3 (Bethesda)">
        <title>The reference genome sequence of Saccharomyces cerevisiae: Then and now.</title>
        <authorList>
            <person name="Engel S.R."/>
            <person name="Dietrich F.S."/>
            <person name="Fisk D.G."/>
            <person name="Binkley G."/>
            <person name="Balakrishnan R."/>
            <person name="Costanzo M.C."/>
            <person name="Dwight S.S."/>
            <person name="Hitz B.C."/>
            <person name="Karra K."/>
            <person name="Nash R.S."/>
            <person name="Weng S."/>
            <person name="Wong E.D."/>
            <person name="Lloyd P."/>
            <person name="Skrzypek M.S."/>
            <person name="Miyasato S.R."/>
            <person name="Simison M."/>
            <person name="Cherry J.M."/>
        </authorList>
    </citation>
    <scope>GENOME REANNOTATION</scope>
    <source>
        <strain>ATCC 204508 / S288c</strain>
    </source>
</reference>
<reference key="3">
    <citation type="journal article" date="2009" name="Genetics">
        <title>Genetic identification of factors that modulate ribosomal DNA transcription in Saccharomyces cerevisiae.</title>
        <authorList>
            <person name="Hontz R.D."/>
            <person name="Niederer R.O."/>
            <person name="Johnson J.M."/>
            <person name="Smith J.S."/>
        </authorList>
    </citation>
    <scope>FUNCTION</scope>
</reference>
<feature type="chain" id="PRO_0000051472" description="Regulator of rDNA transcription protein 13">
    <location>
        <begin position="1"/>
        <end position="185"/>
    </location>
</feature>
<feature type="repeat" description="WD 1">
    <location>
        <begin position="9"/>
        <end position="48"/>
    </location>
</feature>
<feature type="repeat" description="WD 2">
    <location>
        <begin position="71"/>
        <end position="108"/>
    </location>
</feature>
<feature type="repeat" description="WD 3">
    <location>
        <begin position="111"/>
        <end position="148"/>
    </location>
</feature>
<evidence type="ECO:0000269" key="1">
    <source>
    </source>
</evidence>
<dbReference type="EMBL" id="U18813">
    <property type="protein sequence ID" value="AAB64602.1"/>
    <property type="molecule type" value="Genomic_DNA"/>
</dbReference>
<dbReference type="EMBL" id="BK006939">
    <property type="protein sequence ID" value="DAA07725.1"/>
    <property type="molecule type" value="Genomic_DNA"/>
</dbReference>
<dbReference type="PIR" id="S50569">
    <property type="entry name" value="S50569"/>
</dbReference>
<dbReference type="RefSeq" id="NP_010988.1">
    <property type="nucleotide sequence ID" value="NM_001178957.1"/>
</dbReference>
<dbReference type="SMR" id="P40042"/>
<dbReference type="BioGRID" id="36809">
    <property type="interactions" value="47"/>
</dbReference>
<dbReference type="DIP" id="DIP-2848N"/>
<dbReference type="FunCoup" id="P40042">
    <property type="interactions" value="32"/>
</dbReference>
<dbReference type="IntAct" id="P40042">
    <property type="interactions" value="2"/>
</dbReference>
<dbReference type="MINT" id="P40042"/>
<dbReference type="STRING" id="4932.YER066W"/>
<dbReference type="PaxDb" id="4932-YER066W"/>
<dbReference type="PeptideAtlas" id="P40042"/>
<dbReference type="EnsemblFungi" id="YER066W_mRNA">
    <property type="protein sequence ID" value="YER066W"/>
    <property type="gene ID" value="YER066W"/>
</dbReference>
<dbReference type="GeneID" id="856796"/>
<dbReference type="KEGG" id="sce:YER066W"/>
<dbReference type="AGR" id="SGD:S000000868"/>
<dbReference type="SGD" id="S000000868">
    <property type="gene designation" value="RRT13"/>
</dbReference>
<dbReference type="VEuPathDB" id="FungiDB:YER066W"/>
<dbReference type="eggNOG" id="KOG0274">
    <property type="taxonomic scope" value="Eukaryota"/>
</dbReference>
<dbReference type="GeneTree" id="ENSGT00940000174696"/>
<dbReference type="HOGENOM" id="CLU_1462435_0_0_1"/>
<dbReference type="InParanoid" id="P40042"/>
<dbReference type="OMA" id="NTITALX"/>
<dbReference type="OrthoDB" id="190105at2759"/>
<dbReference type="BioCyc" id="YEAST:G3O-30240-MONOMER"/>
<dbReference type="BioGRID-ORCS" id="856796">
    <property type="hits" value="0 hits in 10 CRISPR screens"/>
</dbReference>
<dbReference type="PRO" id="PR:P40042"/>
<dbReference type="Proteomes" id="UP000002311">
    <property type="component" value="Chromosome V"/>
</dbReference>
<dbReference type="RNAct" id="P40042">
    <property type="molecule type" value="protein"/>
</dbReference>
<dbReference type="Gene3D" id="2.130.10.10">
    <property type="entry name" value="YVTN repeat-like/Quinoprotein amine dehydrogenase"/>
    <property type="match status" value="1"/>
</dbReference>
<dbReference type="InterPro" id="IPR020472">
    <property type="entry name" value="G-protein_beta_WD-40_rep"/>
</dbReference>
<dbReference type="InterPro" id="IPR015943">
    <property type="entry name" value="WD40/YVTN_repeat-like_dom_sf"/>
</dbReference>
<dbReference type="InterPro" id="IPR019775">
    <property type="entry name" value="WD40_repeat_CS"/>
</dbReference>
<dbReference type="InterPro" id="IPR036322">
    <property type="entry name" value="WD40_repeat_dom_sf"/>
</dbReference>
<dbReference type="InterPro" id="IPR001680">
    <property type="entry name" value="WD40_rpt"/>
</dbReference>
<dbReference type="PANTHER" id="PTHR19848:SF8">
    <property type="entry name" value="F-BOX AND WD REPEAT DOMAIN CONTAINING 7"/>
    <property type="match status" value="1"/>
</dbReference>
<dbReference type="PANTHER" id="PTHR19848">
    <property type="entry name" value="WD40 REPEAT PROTEIN"/>
    <property type="match status" value="1"/>
</dbReference>
<dbReference type="Pfam" id="PF00400">
    <property type="entry name" value="WD40"/>
    <property type="match status" value="2"/>
</dbReference>
<dbReference type="PRINTS" id="PR00320">
    <property type="entry name" value="GPROTEINBRPT"/>
</dbReference>
<dbReference type="SMART" id="SM00320">
    <property type="entry name" value="WD40"/>
    <property type="match status" value="3"/>
</dbReference>
<dbReference type="SUPFAM" id="SSF50978">
    <property type="entry name" value="WD40 repeat-like"/>
    <property type="match status" value="1"/>
</dbReference>
<dbReference type="PROSITE" id="PS00678">
    <property type="entry name" value="WD_REPEATS_1"/>
    <property type="match status" value="1"/>
</dbReference>
<dbReference type="PROSITE" id="PS50082">
    <property type="entry name" value="WD_REPEATS_2"/>
    <property type="match status" value="2"/>
</dbReference>
<dbReference type="PROSITE" id="PS50294">
    <property type="entry name" value="WD_REPEATS_REGION"/>
    <property type="match status" value="1"/>
</dbReference>